<comment type="function">
    <text evidence="1">Specifically methylates the guanine in position 1835 (m2G1835) of 23S rRNA.</text>
</comment>
<comment type="catalytic activity">
    <reaction evidence="1">
        <text>guanosine(1835) in 23S rRNA + S-adenosyl-L-methionine = N(2)-methylguanosine(1835) in 23S rRNA + S-adenosyl-L-homocysteine + H(+)</text>
        <dbReference type="Rhea" id="RHEA:42744"/>
        <dbReference type="Rhea" id="RHEA-COMP:10217"/>
        <dbReference type="Rhea" id="RHEA-COMP:10218"/>
        <dbReference type="ChEBI" id="CHEBI:15378"/>
        <dbReference type="ChEBI" id="CHEBI:57856"/>
        <dbReference type="ChEBI" id="CHEBI:59789"/>
        <dbReference type="ChEBI" id="CHEBI:74269"/>
        <dbReference type="ChEBI" id="CHEBI:74481"/>
        <dbReference type="EC" id="2.1.1.174"/>
    </reaction>
</comment>
<comment type="subcellular location">
    <subcellularLocation>
        <location evidence="1">Cytoplasm</location>
    </subcellularLocation>
</comment>
<comment type="similarity">
    <text evidence="1">Belongs to the methyltransferase superfamily. RlmG family.</text>
</comment>
<keyword id="KW-0963">Cytoplasm</keyword>
<keyword id="KW-0489">Methyltransferase</keyword>
<keyword id="KW-0698">rRNA processing</keyword>
<keyword id="KW-0949">S-adenosyl-L-methionine</keyword>
<keyword id="KW-0808">Transferase</keyword>
<organism>
    <name type="scientific">Salmonella choleraesuis (strain SC-B67)</name>
    <dbReference type="NCBI Taxonomy" id="321314"/>
    <lineage>
        <taxon>Bacteria</taxon>
        <taxon>Pseudomonadati</taxon>
        <taxon>Pseudomonadota</taxon>
        <taxon>Gammaproteobacteria</taxon>
        <taxon>Enterobacterales</taxon>
        <taxon>Enterobacteriaceae</taxon>
        <taxon>Salmonella</taxon>
    </lineage>
</organism>
<dbReference type="EC" id="2.1.1.174" evidence="1"/>
<dbReference type="EMBL" id="AE017220">
    <property type="protein sequence ID" value="AAX67073.1"/>
    <property type="molecule type" value="Genomic_DNA"/>
</dbReference>
<dbReference type="RefSeq" id="WP_000019985.1">
    <property type="nucleotide sequence ID" value="NC_006905.1"/>
</dbReference>
<dbReference type="SMR" id="Q57JN9"/>
<dbReference type="KEGG" id="sec:SCH_3167"/>
<dbReference type="HOGENOM" id="CLU_040288_4_0_6"/>
<dbReference type="Proteomes" id="UP000000538">
    <property type="component" value="Chromosome"/>
</dbReference>
<dbReference type="GO" id="GO:0005737">
    <property type="term" value="C:cytoplasm"/>
    <property type="evidence" value="ECO:0007669"/>
    <property type="project" value="UniProtKB-SubCell"/>
</dbReference>
<dbReference type="GO" id="GO:0052916">
    <property type="term" value="F:23S rRNA (guanine(1835)-N(2))-methyltransferase activity"/>
    <property type="evidence" value="ECO:0007669"/>
    <property type="project" value="UniProtKB-EC"/>
</dbReference>
<dbReference type="GO" id="GO:0003676">
    <property type="term" value="F:nucleic acid binding"/>
    <property type="evidence" value="ECO:0007669"/>
    <property type="project" value="InterPro"/>
</dbReference>
<dbReference type="CDD" id="cd02440">
    <property type="entry name" value="AdoMet_MTases"/>
    <property type="match status" value="1"/>
</dbReference>
<dbReference type="FunFam" id="3.40.50.150:FF:000046">
    <property type="entry name" value="Ribosomal RNA large subunit methyltransferase G"/>
    <property type="match status" value="1"/>
</dbReference>
<dbReference type="FunFam" id="3.40.50.150:FF:000047">
    <property type="entry name" value="Ribosomal RNA large subunit methyltransferase G"/>
    <property type="match status" value="1"/>
</dbReference>
<dbReference type="Gene3D" id="3.40.50.150">
    <property type="entry name" value="Vaccinia Virus protein VP39"/>
    <property type="match status" value="2"/>
</dbReference>
<dbReference type="HAMAP" id="MF_01859">
    <property type="entry name" value="23SrRNA_methyltr_G"/>
    <property type="match status" value="1"/>
</dbReference>
<dbReference type="InterPro" id="IPR002052">
    <property type="entry name" value="DNA_methylase_N6_adenine_CS"/>
</dbReference>
<dbReference type="InterPro" id="IPR017237">
    <property type="entry name" value="rRNA_m2G-MeTrfase_RlmG"/>
</dbReference>
<dbReference type="InterPro" id="IPR046977">
    <property type="entry name" value="RsmC/RlmG"/>
</dbReference>
<dbReference type="InterPro" id="IPR029063">
    <property type="entry name" value="SAM-dependent_MTases_sf"/>
</dbReference>
<dbReference type="InterPro" id="IPR007848">
    <property type="entry name" value="Small_mtfrase_dom"/>
</dbReference>
<dbReference type="NCBIfam" id="NF011577">
    <property type="entry name" value="PRK15001.1"/>
    <property type="match status" value="1"/>
</dbReference>
<dbReference type="PANTHER" id="PTHR47816:SF5">
    <property type="entry name" value="RIBOSOMAL RNA LARGE SUBUNIT METHYLTRANSFERASE G"/>
    <property type="match status" value="1"/>
</dbReference>
<dbReference type="PANTHER" id="PTHR47816">
    <property type="entry name" value="RIBOSOMAL RNA SMALL SUBUNIT METHYLTRANSFERASE C"/>
    <property type="match status" value="1"/>
</dbReference>
<dbReference type="Pfam" id="PF05175">
    <property type="entry name" value="MTS"/>
    <property type="match status" value="1"/>
</dbReference>
<dbReference type="PIRSF" id="PIRSF037565">
    <property type="entry name" value="RRNA_m2G_Mtase_RsmD_prd"/>
    <property type="match status" value="1"/>
</dbReference>
<dbReference type="SUPFAM" id="SSF53335">
    <property type="entry name" value="S-adenosyl-L-methionine-dependent methyltransferases"/>
    <property type="match status" value="1"/>
</dbReference>
<accession>Q57JN9</accession>
<name>RLMG_SALCH</name>
<protein>
    <recommendedName>
        <fullName evidence="1">Ribosomal RNA large subunit methyltransferase G</fullName>
        <ecNumber evidence="1">2.1.1.174</ecNumber>
    </recommendedName>
    <alternativeName>
        <fullName evidence="1">23S rRNA m2G1835 methyltransferase</fullName>
    </alternativeName>
    <alternativeName>
        <fullName evidence="1">rRNA (guanine-N(2)-)-methyltransferase RlmG</fullName>
    </alternativeName>
</protein>
<sequence length="378" mass="42286">MSHVDDGFRSLTLKRFPQTDDVNPLLAWEAADEYLLQQLDETEIRGPVLILNDTFGALSCALAEHSPYSIGDSYLSELGTRENLRHNGIAESSVTFLDSTADYPQAPGVVLIKVPKTLALLEQQLRALRKVVTAQTRIIAGAKARDIHTSTLELFEKVLGPTTTTLAWKKARLINCTFSHPQLADAPQTLSWKLEDTGWTIHNHANVFSRTGLDIGARFFMQHLPENLDGEIVDLGCGNGVIGLSLLAKNPQAKVVFVDESPMAVDSSRLNVETNLPEAFERCEFMINNALSGVEPFRFNAVFCNPPFHQKHALTDNIAWEMFHHARRCLKINGELYIVANRHLDYFHKLKKIFGNCATIATNNKFVILKAVKQGRRR</sequence>
<reference key="1">
    <citation type="journal article" date="2005" name="Nucleic Acids Res.">
        <title>The genome sequence of Salmonella enterica serovar Choleraesuis, a highly invasive and resistant zoonotic pathogen.</title>
        <authorList>
            <person name="Chiu C.-H."/>
            <person name="Tang P."/>
            <person name="Chu C."/>
            <person name="Hu S."/>
            <person name="Bao Q."/>
            <person name="Yu J."/>
            <person name="Chou Y.-Y."/>
            <person name="Wang H.-S."/>
            <person name="Lee Y.-S."/>
        </authorList>
    </citation>
    <scope>NUCLEOTIDE SEQUENCE [LARGE SCALE GENOMIC DNA]</scope>
    <source>
        <strain>SC-B67</strain>
    </source>
</reference>
<gene>
    <name evidence="1" type="primary">rlmG</name>
    <name type="ordered locus">SCH_3167</name>
</gene>
<feature type="chain" id="PRO_0000366491" description="Ribosomal RNA large subunit methyltransferase G">
    <location>
        <begin position="1"/>
        <end position="378"/>
    </location>
</feature>
<evidence type="ECO:0000255" key="1">
    <source>
        <dbReference type="HAMAP-Rule" id="MF_01859"/>
    </source>
</evidence>
<proteinExistence type="inferred from homology"/>